<sequence length="199" mass="21507">MIARLTGMLAHKSPDAIIIDVNGVGYRVQIPFSTYYELPDEGKTVSLSIYTHVKEDAISLFGFRTVAEKEFFQVLISVSGIGPKMARDILSNIQPDELAGAILQGNLVRLSSIPGIGKKTAERLVLELKEKVRKMDVAPSTKEAAPSEAPPEVADDVASALVNLGYKEAVVRKVLAEMAIESGASTEAVLRQALKILMK</sequence>
<gene>
    <name evidence="1" type="primary">ruvA</name>
    <name type="ordered locus">Gmet_0745</name>
</gene>
<keyword id="KW-0963">Cytoplasm</keyword>
<keyword id="KW-0227">DNA damage</keyword>
<keyword id="KW-0233">DNA recombination</keyword>
<keyword id="KW-0234">DNA repair</keyword>
<keyword id="KW-0238">DNA-binding</keyword>
<keyword id="KW-1185">Reference proteome</keyword>
<organism>
    <name type="scientific">Geobacter metallireducens (strain ATCC 53774 / DSM 7210 / GS-15)</name>
    <dbReference type="NCBI Taxonomy" id="269799"/>
    <lineage>
        <taxon>Bacteria</taxon>
        <taxon>Pseudomonadati</taxon>
        <taxon>Thermodesulfobacteriota</taxon>
        <taxon>Desulfuromonadia</taxon>
        <taxon>Geobacterales</taxon>
        <taxon>Geobacteraceae</taxon>
        <taxon>Geobacter</taxon>
    </lineage>
</organism>
<comment type="function">
    <text evidence="1">The RuvA-RuvB-RuvC complex processes Holliday junction (HJ) DNA during genetic recombination and DNA repair, while the RuvA-RuvB complex plays an important role in the rescue of blocked DNA replication forks via replication fork reversal (RFR). RuvA specifically binds to HJ cruciform DNA, conferring on it an open structure. The RuvB hexamer acts as an ATP-dependent pump, pulling dsDNA into and through the RuvAB complex. HJ branch migration allows RuvC to scan DNA until it finds its consensus sequence, where it cleaves and resolves the cruciform DNA.</text>
</comment>
<comment type="subunit">
    <text evidence="1">Homotetramer. Forms an RuvA(8)-RuvB(12)-Holliday junction (HJ) complex. HJ DNA is sandwiched between 2 RuvA tetramers; dsDNA enters through RuvA and exits via RuvB. An RuvB hexamer assembles on each DNA strand where it exits the tetramer. Each RuvB hexamer is contacted by two RuvA subunits (via domain III) on 2 adjacent RuvB subunits; this complex drives branch migration. In the full resolvosome a probable DNA-RuvA(4)-RuvB(12)-RuvC(2) complex forms which resolves the HJ.</text>
</comment>
<comment type="subcellular location">
    <subcellularLocation>
        <location evidence="1">Cytoplasm</location>
    </subcellularLocation>
</comment>
<comment type="domain">
    <text evidence="1">Has three domains with a flexible linker between the domains II and III and assumes an 'L' shape. Domain III is highly mobile and contacts RuvB.</text>
</comment>
<comment type="similarity">
    <text evidence="1">Belongs to the RuvA family.</text>
</comment>
<name>RUVA_GEOMG</name>
<accession>Q39XN7</accession>
<dbReference type="EMBL" id="CP000148">
    <property type="protein sequence ID" value="ABB30987.1"/>
    <property type="molecule type" value="Genomic_DNA"/>
</dbReference>
<dbReference type="RefSeq" id="WP_004514462.1">
    <property type="nucleotide sequence ID" value="NC_007517.1"/>
</dbReference>
<dbReference type="SMR" id="Q39XN7"/>
<dbReference type="STRING" id="269799.Gmet_0745"/>
<dbReference type="KEGG" id="gme:Gmet_0745"/>
<dbReference type="eggNOG" id="COG0632">
    <property type="taxonomic scope" value="Bacteria"/>
</dbReference>
<dbReference type="HOGENOM" id="CLU_087936_0_0_7"/>
<dbReference type="Proteomes" id="UP000007073">
    <property type="component" value="Chromosome"/>
</dbReference>
<dbReference type="GO" id="GO:0005737">
    <property type="term" value="C:cytoplasm"/>
    <property type="evidence" value="ECO:0007669"/>
    <property type="project" value="UniProtKB-SubCell"/>
</dbReference>
<dbReference type="GO" id="GO:0009379">
    <property type="term" value="C:Holliday junction helicase complex"/>
    <property type="evidence" value="ECO:0007669"/>
    <property type="project" value="InterPro"/>
</dbReference>
<dbReference type="GO" id="GO:0048476">
    <property type="term" value="C:Holliday junction resolvase complex"/>
    <property type="evidence" value="ECO:0007669"/>
    <property type="project" value="UniProtKB-UniRule"/>
</dbReference>
<dbReference type="GO" id="GO:0005524">
    <property type="term" value="F:ATP binding"/>
    <property type="evidence" value="ECO:0007669"/>
    <property type="project" value="InterPro"/>
</dbReference>
<dbReference type="GO" id="GO:0000400">
    <property type="term" value="F:four-way junction DNA binding"/>
    <property type="evidence" value="ECO:0007669"/>
    <property type="project" value="UniProtKB-UniRule"/>
</dbReference>
<dbReference type="GO" id="GO:0009378">
    <property type="term" value="F:four-way junction helicase activity"/>
    <property type="evidence" value="ECO:0007669"/>
    <property type="project" value="InterPro"/>
</dbReference>
<dbReference type="GO" id="GO:0006310">
    <property type="term" value="P:DNA recombination"/>
    <property type="evidence" value="ECO:0007669"/>
    <property type="project" value="UniProtKB-UniRule"/>
</dbReference>
<dbReference type="GO" id="GO:0006281">
    <property type="term" value="P:DNA repair"/>
    <property type="evidence" value="ECO:0007669"/>
    <property type="project" value="UniProtKB-UniRule"/>
</dbReference>
<dbReference type="CDD" id="cd14332">
    <property type="entry name" value="UBA_RuvA_C"/>
    <property type="match status" value="1"/>
</dbReference>
<dbReference type="Gene3D" id="1.10.150.20">
    <property type="entry name" value="5' to 3' exonuclease, C-terminal subdomain"/>
    <property type="match status" value="1"/>
</dbReference>
<dbReference type="Gene3D" id="1.10.8.10">
    <property type="entry name" value="DNA helicase RuvA subunit, C-terminal domain"/>
    <property type="match status" value="1"/>
</dbReference>
<dbReference type="Gene3D" id="2.40.50.140">
    <property type="entry name" value="Nucleic acid-binding proteins"/>
    <property type="match status" value="1"/>
</dbReference>
<dbReference type="HAMAP" id="MF_00031">
    <property type="entry name" value="DNA_HJ_migration_RuvA"/>
    <property type="match status" value="1"/>
</dbReference>
<dbReference type="InterPro" id="IPR013849">
    <property type="entry name" value="DNA_helicase_Holl-junc_RuvA_I"/>
</dbReference>
<dbReference type="InterPro" id="IPR003583">
    <property type="entry name" value="Hlx-hairpin-Hlx_DNA-bd_motif"/>
</dbReference>
<dbReference type="InterPro" id="IPR012340">
    <property type="entry name" value="NA-bd_OB-fold"/>
</dbReference>
<dbReference type="InterPro" id="IPR000085">
    <property type="entry name" value="RuvA"/>
</dbReference>
<dbReference type="InterPro" id="IPR010994">
    <property type="entry name" value="RuvA_2-like"/>
</dbReference>
<dbReference type="InterPro" id="IPR011114">
    <property type="entry name" value="RuvA_C"/>
</dbReference>
<dbReference type="InterPro" id="IPR036267">
    <property type="entry name" value="RuvA_C_sf"/>
</dbReference>
<dbReference type="NCBIfam" id="TIGR00084">
    <property type="entry name" value="ruvA"/>
    <property type="match status" value="1"/>
</dbReference>
<dbReference type="Pfam" id="PF14520">
    <property type="entry name" value="HHH_5"/>
    <property type="match status" value="1"/>
</dbReference>
<dbReference type="Pfam" id="PF07499">
    <property type="entry name" value="RuvA_C"/>
    <property type="match status" value="1"/>
</dbReference>
<dbReference type="Pfam" id="PF01330">
    <property type="entry name" value="RuvA_N"/>
    <property type="match status" value="1"/>
</dbReference>
<dbReference type="SMART" id="SM00278">
    <property type="entry name" value="HhH1"/>
    <property type="match status" value="2"/>
</dbReference>
<dbReference type="SUPFAM" id="SSF46929">
    <property type="entry name" value="DNA helicase RuvA subunit, C-terminal domain"/>
    <property type="match status" value="1"/>
</dbReference>
<dbReference type="SUPFAM" id="SSF50249">
    <property type="entry name" value="Nucleic acid-binding proteins"/>
    <property type="match status" value="1"/>
</dbReference>
<dbReference type="SUPFAM" id="SSF47781">
    <property type="entry name" value="RuvA domain 2-like"/>
    <property type="match status" value="1"/>
</dbReference>
<evidence type="ECO:0000255" key="1">
    <source>
        <dbReference type="HAMAP-Rule" id="MF_00031"/>
    </source>
</evidence>
<feature type="chain" id="PRO_1000002454" description="Holliday junction branch migration complex subunit RuvA">
    <location>
        <begin position="1"/>
        <end position="199"/>
    </location>
</feature>
<feature type="region of interest" description="Domain I" evidence="1">
    <location>
        <begin position="1"/>
        <end position="64"/>
    </location>
</feature>
<feature type="region of interest" description="Domain II" evidence="1">
    <location>
        <begin position="65"/>
        <end position="143"/>
    </location>
</feature>
<feature type="region of interest" description="Flexible linker" evidence="1">
    <location>
        <begin position="144"/>
        <end position="154"/>
    </location>
</feature>
<feature type="region of interest" description="Domain III" evidence="1">
    <location>
        <begin position="154"/>
        <end position="199"/>
    </location>
</feature>
<proteinExistence type="inferred from homology"/>
<protein>
    <recommendedName>
        <fullName evidence="1">Holliday junction branch migration complex subunit RuvA</fullName>
    </recommendedName>
</protein>
<reference key="1">
    <citation type="journal article" date="2009" name="BMC Microbiol.">
        <title>The genome sequence of Geobacter metallireducens: features of metabolism, physiology and regulation common and dissimilar to Geobacter sulfurreducens.</title>
        <authorList>
            <person name="Aklujkar M."/>
            <person name="Krushkal J."/>
            <person name="DiBartolo G."/>
            <person name="Lapidus A."/>
            <person name="Land M.L."/>
            <person name="Lovley D.R."/>
        </authorList>
    </citation>
    <scope>NUCLEOTIDE SEQUENCE [LARGE SCALE GENOMIC DNA]</scope>
    <source>
        <strain>ATCC 53774 / DSM 7210 / GS-15</strain>
    </source>
</reference>